<comment type="function">
    <text evidence="1 2">F-actin-capping proteins bind in a Ca(2+)-independent manner to the fast growing ends of actin filaments (barbed end) thereby blocking the exchange of subunits at these ends. Unlike other capping proteins (such as gelsolin and severin), these proteins do not sever actin filaments. Plays a role in the regulation of cell morphology and cytoskeletal organization (By similarity). Forms, with CAPZB, the barbed end of the fast growing ends of actin filaments in the dynactin complex and stabilizes dynactin structure. The dynactin multiprotein complex activates the molecular motor dynein for ultra-processive transport along microtubules (By similarity).</text>
</comment>
<comment type="subunit">
    <text evidence="1 2">Component of the F-actin capping complex, composed of a heterodimer of an alpha and a beta subunit. Subunit of dynactin, a multiprotein complex part of a tripartite complex with dynein and a adapter, such as BICDL1, BICD2 or HOOK3. The dynactin complex is built around ACTR1A/ACTB filament and consists of an actin-related filament composed of a shoulder domain, a pointed end and a barbed end. Its length is defined by its flexible shoulder domain. The soulder is composed of 2 DCTN1 subunits, 4 DCTN2 and 2 DCTN3. The 4 DCNT2 (via N-terminus) bind the ACTR1A filament and act as molecular rulers to determine the length. The pointed end is important for binding dynein-dynactin cargo adapters. Consists of 4 subunits: ACTR10, DCNT4, DCTN5 and DCTN6. The barbed end is composed of a CAPZA1:CAPZB heterodimers, which binds ACTR1A/ACTB filament and dynactin and stabilizes dynactin (By similarity). Interacts with ARHGAP17. Interaction with RCSD1/CAPZIP. Component of the WASH complex, composed of F-actin-capping protein subunit alpha (CAPZA1, CAPZA2 or CAPZA3), F-actin-capping protein subunit beta (CAPZB), WASH (WASHC1, WASH2P, WASH3P, WASH4P, WASH5P or WASH6P), WASHC2 (WASHC2A or WASHC2C), WASHC3, WASHC4 and WASHC5. Interacts with ACTG1. Directly interacts with CRACD; this interaction decreases binding to actin (By similarity).</text>
</comment>
<comment type="interaction">
    <interactant intactId="EBI-2128126">
        <id>P79136</id>
    </interactant>
    <interactant intactId="EBI-2128107">
        <id>Q3T0F7</id>
        <label>MTPN</label>
    </interactant>
    <organismsDiffer>false</organismsDiffer>
    <experiments>2</experiments>
</comment>
<comment type="subcellular location">
    <subcellularLocation>
        <location evidence="1">Cytoplasm</location>
        <location evidence="1">Cytoskeleton</location>
    </subcellularLocation>
    <subcellularLocation>
        <location evidence="3">Cytoplasm</location>
        <location evidence="3">Cytoskeleton</location>
        <location evidence="3">Perinuclear theca</location>
        <location evidence="3">Calyx</location>
    </subcellularLocation>
    <text evidence="3">Sperm head cytoskeletal structure tightly associated to the nucleus.</text>
</comment>
<comment type="alternative products">
    <event type="alternative splicing"/>
    <isoform>
        <id>P79136-1</id>
        <name>Beta-3</name>
        <sequence type="displayed"/>
    </isoform>
    <isoform>
        <id>P79136-3</id>
        <name>Beta-1</name>
        <sequence type="not described"/>
    </isoform>
    <isoform>
        <id>P79136-2</id>
        <name>Beta-2</name>
        <sequence type="described" ref="VSP_000766"/>
    </isoform>
</comment>
<comment type="tissue specificity">
    <text>The isoform beta-3 is predominantly expressed in the testis. It is only detected in total sperm, sperm heads and the calyx fraction, but not in sperm tails or any supernatant fraction. Weaker expression also found in brain.</text>
</comment>
<comment type="similarity">
    <text evidence="5">Belongs to the F-actin-capping protein beta subunit family.</text>
</comment>
<keyword id="KW-0007">Acetylation</keyword>
<keyword id="KW-0117">Actin capping</keyword>
<keyword id="KW-0009">Actin-binding</keyword>
<keyword id="KW-0025">Alternative splicing</keyword>
<keyword id="KW-0963">Cytoplasm</keyword>
<keyword id="KW-0206">Cytoskeleton</keyword>
<keyword id="KW-0597">Phosphoprotein</keyword>
<keyword id="KW-1185">Reference proteome</keyword>
<name>CAPZB_BOVIN</name>
<evidence type="ECO:0000250" key="1">
    <source>
        <dbReference type="UniProtKB" id="A9XFX6"/>
    </source>
</evidence>
<evidence type="ECO:0000250" key="2">
    <source>
        <dbReference type="UniProtKB" id="P47756"/>
    </source>
</evidence>
<evidence type="ECO:0000269" key="3">
    <source>
    </source>
</evidence>
<evidence type="ECO:0000303" key="4">
    <source>
    </source>
</evidence>
<evidence type="ECO:0000305" key="5"/>
<proteinExistence type="evidence at protein level"/>
<protein>
    <recommendedName>
        <fullName>F-actin-capping protein subunit beta</fullName>
    </recommendedName>
    <alternativeName>
        <fullName>CapZ beta</fullName>
    </alternativeName>
</protein>
<accession>P79136</accession>
<accession>Q3T012</accession>
<organism>
    <name type="scientific">Bos taurus</name>
    <name type="common">Bovine</name>
    <dbReference type="NCBI Taxonomy" id="9913"/>
    <lineage>
        <taxon>Eukaryota</taxon>
        <taxon>Metazoa</taxon>
        <taxon>Chordata</taxon>
        <taxon>Craniata</taxon>
        <taxon>Vertebrata</taxon>
        <taxon>Euteleostomi</taxon>
        <taxon>Mammalia</taxon>
        <taxon>Eutheria</taxon>
        <taxon>Laurasiatheria</taxon>
        <taxon>Artiodactyla</taxon>
        <taxon>Ruminantia</taxon>
        <taxon>Pecora</taxon>
        <taxon>Bovidae</taxon>
        <taxon>Bovinae</taxon>
        <taxon>Bos</taxon>
    </lineage>
</organism>
<gene>
    <name type="primary">CAPZB</name>
</gene>
<sequence>MHPCRRSLPFPLNCQLVKVGTADYGGASDQSDQQLDCALDLMRRLPPQQIEKNLSDLIDLVPSLCEDLLSSVDQPLKIARDKVVGKDYLLCDYNRDGDSYRSPWSNKYDPPLEDGAMPSARLRKLEVEANNAFDQYRDLYFEGGVSSVYLWDLDHGFAGVILIKKAGDGSKKIKGCWDSIHVVEVQEKSSGRTAHYKLTSTVMLWLQTNKSGSGTMNLGGSLTRQMEKDETVSDCSPHIANIGRLVEDMENKIRSTLNEIYFGKTKDIVNGLRSVQTFADKSKQEALKNDLVEALKRKQQC</sequence>
<dbReference type="EMBL" id="Z85980">
    <property type="protein sequence ID" value="CAB06626.1"/>
    <property type="molecule type" value="mRNA"/>
</dbReference>
<dbReference type="EMBL" id="Y10372">
    <property type="protein sequence ID" value="CAA71401.1"/>
    <property type="molecule type" value="mRNA"/>
</dbReference>
<dbReference type="EMBL" id="BC102613">
    <property type="protein sequence ID" value="AAI02614.1"/>
    <property type="molecule type" value="mRNA"/>
</dbReference>
<dbReference type="RefSeq" id="NP_788821.1">
    <molecule id="P79136-1"/>
    <property type="nucleotide sequence ID" value="NM_176648.4"/>
</dbReference>
<dbReference type="RefSeq" id="XP_024855040.1">
    <molecule id="P79136-2"/>
    <property type="nucleotide sequence ID" value="XM_024999272.2"/>
</dbReference>
<dbReference type="BMRB" id="P79136"/>
<dbReference type="SMR" id="P79136"/>
<dbReference type="CORUM" id="P79136"/>
<dbReference type="FunCoup" id="P79136">
    <property type="interactions" value="3092"/>
</dbReference>
<dbReference type="IntAct" id="P79136">
    <property type="interactions" value="3"/>
</dbReference>
<dbReference type="MINT" id="P79136"/>
<dbReference type="STRING" id="9913.ENSBTAP00000059505"/>
<dbReference type="PaxDb" id="9913-ENSBTAP00000005983"/>
<dbReference type="PeptideAtlas" id="P79136"/>
<dbReference type="Ensembl" id="ENSBTAT00000005983.6">
    <molecule id="P79136-1"/>
    <property type="protein sequence ID" value="ENSBTAP00000005983.6"/>
    <property type="gene ID" value="ENSBTAG00000004554.6"/>
</dbReference>
<dbReference type="Ensembl" id="ENSBTAT00000086124.2">
    <molecule id="P79136-2"/>
    <property type="protein sequence ID" value="ENSBTAP00000067222.2"/>
    <property type="gene ID" value="ENSBTAG00000004554.6"/>
</dbReference>
<dbReference type="GeneID" id="338052"/>
<dbReference type="KEGG" id="bta:338052"/>
<dbReference type="CTD" id="832"/>
<dbReference type="eggNOG" id="KOG3174">
    <property type="taxonomic scope" value="Eukaryota"/>
</dbReference>
<dbReference type="GeneTree" id="ENSGT00390000017957"/>
<dbReference type="HOGENOM" id="CLU_045864_1_1_1"/>
<dbReference type="InParanoid" id="P79136"/>
<dbReference type="OrthoDB" id="9979678at2759"/>
<dbReference type="TreeFam" id="TF105732"/>
<dbReference type="Proteomes" id="UP000009136">
    <property type="component" value="Chromosome 2"/>
</dbReference>
<dbReference type="GO" id="GO:0005903">
    <property type="term" value="C:brush border"/>
    <property type="evidence" value="ECO:0007669"/>
    <property type="project" value="Ensembl"/>
</dbReference>
<dbReference type="GO" id="GO:0030863">
    <property type="term" value="C:cortical cytoskeleton"/>
    <property type="evidence" value="ECO:0007669"/>
    <property type="project" value="Ensembl"/>
</dbReference>
<dbReference type="GO" id="GO:0033150">
    <property type="term" value="C:cytoskeletal calyx"/>
    <property type="evidence" value="ECO:0007669"/>
    <property type="project" value="UniProtKB-SubCell"/>
</dbReference>
<dbReference type="GO" id="GO:0008290">
    <property type="term" value="C:F-actin capping protein complex"/>
    <property type="evidence" value="ECO:0000318"/>
    <property type="project" value="GO_Central"/>
</dbReference>
<dbReference type="GO" id="GO:0098686">
    <property type="term" value="C:hippocampal mossy fiber to CA3 synapse"/>
    <property type="evidence" value="ECO:0007669"/>
    <property type="project" value="Ensembl"/>
</dbReference>
<dbReference type="GO" id="GO:0030027">
    <property type="term" value="C:lamellipodium"/>
    <property type="evidence" value="ECO:0007669"/>
    <property type="project" value="Ensembl"/>
</dbReference>
<dbReference type="GO" id="GO:0016020">
    <property type="term" value="C:membrane"/>
    <property type="evidence" value="ECO:0007669"/>
    <property type="project" value="Ensembl"/>
</dbReference>
<dbReference type="GO" id="GO:0014069">
    <property type="term" value="C:postsynaptic density"/>
    <property type="evidence" value="ECO:0007669"/>
    <property type="project" value="Ensembl"/>
</dbReference>
<dbReference type="GO" id="GO:0098685">
    <property type="term" value="C:Schaffer collateral - CA1 synapse"/>
    <property type="evidence" value="ECO:0007669"/>
    <property type="project" value="Ensembl"/>
</dbReference>
<dbReference type="GO" id="GO:0120212">
    <property type="term" value="C:sperm head-tail coupling apparatus"/>
    <property type="evidence" value="ECO:0007669"/>
    <property type="project" value="Ensembl"/>
</dbReference>
<dbReference type="GO" id="GO:0071203">
    <property type="term" value="C:WASH complex"/>
    <property type="evidence" value="ECO:0000250"/>
    <property type="project" value="UniProtKB"/>
</dbReference>
<dbReference type="GO" id="GO:0003779">
    <property type="term" value="F:actin binding"/>
    <property type="evidence" value="ECO:0000250"/>
    <property type="project" value="UniProtKB"/>
</dbReference>
<dbReference type="GO" id="GO:0051015">
    <property type="term" value="F:actin filament binding"/>
    <property type="evidence" value="ECO:0000318"/>
    <property type="project" value="GO_Central"/>
</dbReference>
<dbReference type="GO" id="GO:0008154">
    <property type="term" value="P:actin polymerization or depolymerization"/>
    <property type="evidence" value="ECO:0007669"/>
    <property type="project" value="Ensembl"/>
</dbReference>
<dbReference type="GO" id="GO:0051016">
    <property type="term" value="P:barbed-end actin filament capping"/>
    <property type="evidence" value="ECO:0000318"/>
    <property type="project" value="GO_Central"/>
</dbReference>
<dbReference type="GO" id="GO:0000902">
    <property type="term" value="P:cell morphogenesis"/>
    <property type="evidence" value="ECO:0000318"/>
    <property type="project" value="GO_Central"/>
</dbReference>
<dbReference type="GO" id="GO:0007010">
    <property type="term" value="P:cytoskeleton organization"/>
    <property type="evidence" value="ECO:0000250"/>
    <property type="project" value="UniProtKB"/>
</dbReference>
<dbReference type="GO" id="GO:0030032">
    <property type="term" value="P:lamellipodium assembly"/>
    <property type="evidence" value="ECO:0007669"/>
    <property type="project" value="Ensembl"/>
</dbReference>
<dbReference type="GO" id="GO:0051490">
    <property type="term" value="P:negative regulation of filopodium assembly"/>
    <property type="evidence" value="ECO:0000318"/>
    <property type="project" value="GO_Central"/>
</dbReference>
<dbReference type="GO" id="GO:0022604">
    <property type="term" value="P:regulation of cell morphogenesis"/>
    <property type="evidence" value="ECO:0000250"/>
    <property type="project" value="UniProtKB"/>
</dbReference>
<dbReference type="GO" id="GO:0010591">
    <property type="term" value="P:regulation of lamellipodium assembly"/>
    <property type="evidence" value="ECO:0000318"/>
    <property type="project" value="GO_Central"/>
</dbReference>
<dbReference type="FunFam" id="1.20.58.570:FF:000001">
    <property type="entry name" value="F-actin-capping protein subunit beta"/>
    <property type="match status" value="1"/>
</dbReference>
<dbReference type="FunFam" id="3.90.1150.210:FF:000001">
    <property type="entry name" value="F-actin-capping protein subunit beta"/>
    <property type="match status" value="1"/>
</dbReference>
<dbReference type="Gene3D" id="1.20.58.570">
    <property type="match status" value="1"/>
</dbReference>
<dbReference type="Gene3D" id="3.90.1150.210">
    <property type="entry name" value="F-actin capping protein, beta subunit"/>
    <property type="match status" value="1"/>
</dbReference>
<dbReference type="InterPro" id="IPR037282">
    <property type="entry name" value="CapZ_alpha/beta"/>
</dbReference>
<dbReference type="InterPro" id="IPR042276">
    <property type="entry name" value="CapZ_alpha/beta_2"/>
</dbReference>
<dbReference type="InterPro" id="IPR001698">
    <property type="entry name" value="CAPZB"/>
</dbReference>
<dbReference type="InterPro" id="IPR043175">
    <property type="entry name" value="CAPZB_N"/>
</dbReference>
<dbReference type="InterPro" id="IPR019771">
    <property type="entry name" value="F-actin_capping_bsu_CS"/>
</dbReference>
<dbReference type="PANTHER" id="PTHR10619">
    <property type="entry name" value="F-ACTIN-CAPPING PROTEIN SUBUNIT BETA"/>
    <property type="match status" value="1"/>
</dbReference>
<dbReference type="PANTHER" id="PTHR10619:SF1">
    <property type="entry name" value="F-ACTIN-CAPPING PROTEIN SUBUNIT BETA"/>
    <property type="match status" value="1"/>
</dbReference>
<dbReference type="Pfam" id="PF01115">
    <property type="entry name" value="F_actin_cap_B"/>
    <property type="match status" value="1"/>
</dbReference>
<dbReference type="PRINTS" id="PR00192">
    <property type="entry name" value="FACTINCAPB"/>
</dbReference>
<dbReference type="SUPFAM" id="SSF90096">
    <property type="entry name" value="Subunits of heterodimeric actin filament capping protein Capz"/>
    <property type="match status" value="1"/>
</dbReference>
<dbReference type="PROSITE" id="PS00231">
    <property type="entry name" value="F_ACTIN_CAPPING_BETA"/>
    <property type="match status" value="1"/>
</dbReference>
<feature type="chain" id="PRO_0000204633" description="F-actin-capping protein subunit beta">
    <location>
        <begin position="1"/>
        <end position="301"/>
    </location>
</feature>
<feature type="modified residue" description="Phosphoserine" evidence="2">
    <location>
        <position position="31"/>
    </location>
</feature>
<feature type="modified residue" description="N6-acetyllysine" evidence="2">
    <location>
        <position position="264"/>
    </location>
</feature>
<feature type="splice variant" id="VSP_000766" description="In isoform Beta-2." evidence="4">
    <original>MHPCRRSLPFPLNCQLVKVGTADYGGASDQ</original>
    <variation>M</variation>
    <location>
        <begin position="1"/>
        <end position="30"/>
    </location>
</feature>
<reference key="1">
    <citation type="journal article" date="1997" name="Exp. Cell Res.">
        <title>CP beta3, a novel isoform of an actin-binding protein, is a component of the cytoskeletal calyx of the mammalian sperm head.</title>
        <authorList>
            <person name="von Buelow M."/>
            <person name="Rackwitz H.-R."/>
            <person name="Zimbelmann R."/>
            <person name="Franke W.W."/>
        </authorList>
    </citation>
    <scope>NUCLEOTIDE SEQUENCE [MRNA] (ISOFORMS BETA-2 AND BETA-3)</scope>
    <scope>CHARACTERIZATION</scope>
    <source>
        <tissue>Sperm</tissue>
    </source>
</reference>
<reference key="2">
    <citation type="submission" date="2005-08" db="EMBL/GenBank/DDBJ databases">
        <authorList>
            <consortium name="NIH - Mammalian Gene Collection (MGC) project"/>
        </authorList>
    </citation>
    <scope>NUCLEOTIDE SEQUENCE [LARGE SCALE MRNA] (ISOFORM BETA-3)</scope>
    <source>
        <strain>Crossbred X Angus</strain>
        <tissue>Liver</tissue>
    </source>
</reference>